<organism>
    <name type="scientific">Vaccinia virus (strain Tian Tan)</name>
    <name type="common">VACV</name>
    <dbReference type="NCBI Taxonomy" id="10253"/>
    <lineage>
        <taxon>Viruses</taxon>
        <taxon>Varidnaviria</taxon>
        <taxon>Bamfordvirae</taxon>
        <taxon>Nucleocytoviricota</taxon>
        <taxon>Pokkesviricetes</taxon>
        <taxon>Chitovirales</taxon>
        <taxon>Poxviridae</taxon>
        <taxon>Chordopoxvirinae</taxon>
        <taxon>Orthopoxvirus</taxon>
        <taxon>Vaccinia virus</taxon>
    </lineage>
</organism>
<protein>
    <recommendedName>
        <fullName>Telomere-binding protein OPG077</fullName>
    </recommendedName>
    <alternativeName>
        <fullName>Telomere-binding protein I1</fullName>
    </alternativeName>
</protein>
<reference key="1">
    <citation type="submission" date="1998-09" db="EMBL/GenBank/DDBJ databases">
        <title>Complete genomic sequence of vaccinia virus (Tian Tan strain).</title>
        <authorList>
            <person name="Jin Q."/>
            <person name="Hou Y.D."/>
            <person name="Cheng N.H."/>
            <person name="Yao E.M."/>
            <person name="Cheng S.X."/>
            <person name="Yang X.K."/>
            <person name="Jing D.Y."/>
            <person name="Yu W.H."/>
            <person name="Yuan J.S."/>
            <person name="Ma X.J."/>
        </authorList>
    </citation>
    <scope>NUCLEOTIDE SEQUENCE [LARGE SCALE GENOMIC DNA]</scope>
</reference>
<evidence type="ECO:0000250" key="1">
    <source>
        <dbReference type="UniProtKB" id="P16714"/>
    </source>
</evidence>
<evidence type="ECO:0000305" key="2"/>
<accession>Q77TL8</accession>
<dbReference type="EMBL" id="AF095689">
    <property type="protein sequence ID" value="AAF33929.1"/>
    <property type="molecule type" value="Genomic_DNA"/>
</dbReference>
<dbReference type="SMR" id="Q77TL8"/>
<dbReference type="Proteomes" id="UP000163220">
    <property type="component" value="Genome"/>
</dbReference>
<dbReference type="GO" id="GO:0044423">
    <property type="term" value="C:virion component"/>
    <property type="evidence" value="ECO:0007669"/>
    <property type="project" value="UniProtKB-KW"/>
</dbReference>
<dbReference type="GO" id="GO:0003677">
    <property type="term" value="F:DNA binding"/>
    <property type="evidence" value="ECO:0007669"/>
    <property type="project" value="UniProtKB-KW"/>
</dbReference>
<dbReference type="InterPro" id="IPR004969">
    <property type="entry name" value="Poxvirus_I1"/>
</dbReference>
<dbReference type="Pfam" id="PF03289">
    <property type="entry name" value="Pox_I1"/>
    <property type="match status" value="1"/>
</dbReference>
<dbReference type="PIRSF" id="PIRSF015625">
    <property type="entry name" value="VAC_I1L"/>
    <property type="match status" value="1"/>
</dbReference>
<sequence length="312" mass="35841">MAEFEDQLVFNSISARALKAYFTAKINEMVDELVTRKCPQKKKSQAKKPEVRIPVDLVKSSFVKKFGLCNYGGILISLINSLVENNFFTKDGKLDDTGKKELVLTDVEKRILNTIDKSSPLYIDISDVKVLAARLKRSATQFNFNGHTYHLENDKIEDLINQLVKDESIQLDEKSSIKDSMYVIPDELIDVLKTRLFRSPQVKDNIISRTRLYDYFTRVTKRDESSIYVILKDPRIASILSLETVKMGAFMYTKHSMLTNAISSRVDRYSKKFQESFYEDIAEFVKENERVNVSRVVECLTVPNITISSNAE</sequence>
<feature type="chain" id="PRO_0000099560" description="Telomere-binding protein OPG077">
    <location>
        <begin position="1"/>
        <end position="312"/>
    </location>
</feature>
<proteinExistence type="evidence at transcript level"/>
<gene>
    <name type="primary">OPG077</name>
    <name type="ORF">TI1L</name>
</gene>
<keyword id="KW-0238">DNA-binding</keyword>
<keyword id="KW-0946">Virion</keyword>
<name>PG077_VACCT</name>
<comment type="function">
    <text evidence="1">DNA-binding protein which binds to the hairpin form of the viral telomeric sequence. Required for the production of mature virions (MV).</text>
</comment>
<comment type="subcellular location">
    <subcellularLocation>
        <location evidence="1">Virion</location>
    </subcellularLocation>
    <text evidence="1">Present in the virus core.</text>
</comment>
<comment type="induction">
    <text>Expressed in the late phase of the viral replicative cycle.</text>
</comment>
<comment type="miscellaneous">
    <text evidence="1">Each virion contains approximately 670 molecules of OPG077.</text>
</comment>
<comment type="similarity">
    <text evidence="2">Belongs to the orthopoxvirus OPG077 family.</text>
</comment>
<organismHost>
    <name type="scientific">Homo sapiens</name>
    <name type="common">Human</name>
    <dbReference type="NCBI Taxonomy" id="9606"/>
</organismHost>